<gene>
    <name evidence="1" type="primary">eif5a</name>
    <name type="ordered locus">SSO0970</name>
</gene>
<sequence>MSITYTTVGELKVGSYVVIDGEPCRVVEVTKAKTGKHGSAKANVVAIGVFSGAKKTLMAPVDQQVEVPIIEKHIGQIIADMGNKIQVMDLESYETFEIEKPTEDELASKIKPNAELEYWEIMGRRKIVRVK</sequence>
<reference key="1">
    <citation type="journal article" date="2001" name="Proc. Natl. Acad. Sci. U.S.A.">
        <title>The complete genome of the crenarchaeon Sulfolobus solfataricus P2.</title>
        <authorList>
            <person name="She Q."/>
            <person name="Singh R.K."/>
            <person name="Confalonieri F."/>
            <person name="Zivanovic Y."/>
            <person name="Allard G."/>
            <person name="Awayez M.J."/>
            <person name="Chan-Weiher C.C.-Y."/>
            <person name="Clausen I.G."/>
            <person name="Curtis B.A."/>
            <person name="De Moors A."/>
            <person name="Erauso G."/>
            <person name="Fletcher C."/>
            <person name="Gordon P.M.K."/>
            <person name="Heikamp-de Jong I."/>
            <person name="Jeffries A.C."/>
            <person name="Kozera C.J."/>
            <person name="Medina N."/>
            <person name="Peng X."/>
            <person name="Thi-Ngoc H.P."/>
            <person name="Redder P."/>
            <person name="Schenk M.E."/>
            <person name="Theriault C."/>
            <person name="Tolstrup N."/>
            <person name="Charlebois R.L."/>
            <person name="Doolittle W.F."/>
            <person name="Duguet M."/>
            <person name="Gaasterland T."/>
            <person name="Garrett R.A."/>
            <person name="Ragan M.A."/>
            <person name="Sensen C.W."/>
            <person name="Van der Oost J."/>
        </authorList>
    </citation>
    <scope>NUCLEOTIDE SEQUENCE [LARGE SCALE GENOMIC DNA]</scope>
    <source>
        <strain>ATCC 35092 / DSM 1617 / JCM 11322 / P2</strain>
    </source>
</reference>
<organism>
    <name type="scientific">Saccharolobus solfataricus (strain ATCC 35092 / DSM 1617 / JCM 11322 / P2)</name>
    <name type="common">Sulfolobus solfataricus</name>
    <dbReference type="NCBI Taxonomy" id="273057"/>
    <lineage>
        <taxon>Archaea</taxon>
        <taxon>Thermoproteota</taxon>
        <taxon>Thermoprotei</taxon>
        <taxon>Sulfolobales</taxon>
        <taxon>Sulfolobaceae</taxon>
        <taxon>Saccharolobus</taxon>
    </lineage>
</organism>
<accession>Q97ZE8</accession>
<name>IF5A_SACS2</name>
<comment type="function">
    <text evidence="1">Functions by promoting the formation of the first peptide bond.</text>
</comment>
<comment type="subcellular location">
    <subcellularLocation>
        <location evidence="1">Cytoplasm</location>
    </subcellularLocation>
</comment>
<comment type="similarity">
    <text evidence="1">Belongs to the eIF-5A family.</text>
</comment>
<protein>
    <recommendedName>
        <fullName evidence="1">Translation initiation factor 5A</fullName>
    </recommendedName>
    <alternativeName>
        <fullName evidence="1">Hypusine-containing protein</fullName>
    </alternativeName>
    <alternativeName>
        <fullName evidence="1">eIF-5A</fullName>
    </alternativeName>
</protein>
<keyword id="KW-0002">3D-structure</keyword>
<keyword id="KW-0963">Cytoplasm</keyword>
<keyword id="KW-0385">Hypusine</keyword>
<keyword id="KW-0396">Initiation factor</keyword>
<keyword id="KW-0648">Protein biosynthesis</keyword>
<keyword id="KW-1185">Reference proteome</keyword>
<dbReference type="EMBL" id="AE006641">
    <property type="protein sequence ID" value="AAK41244.1"/>
    <property type="molecule type" value="Genomic_DNA"/>
</dbReference>
<dbReference type="PIR" id="E90248">
    <property type="entry name" value="E90248"/>
</dbReference>
<dbReference type="RefSeq" id="WP_009992418.1">
    <property type="nucleotide sequence ID" value="NC_002754.1"/>
</dbReference>
<dbReference type="PDB" id="8PUT">
    <property type="method" value="X-ray"/>
    <property type="resolution" value="2.00 A"/>
    <property type="chains" value="E/F/G/H=1-131"/>
</dbReference>
<dbReference type="PDBsum" id="8PUT"/>
<dbReference type="SMR" id="Q97ZE8"/>
<dbReference type="FunCoup" id="Q97ZE8">
    <property type="interactions" value="197"/>
</dbReference>
<dbReference type="STRING" id="273057.SSO0970"/>
<dbReference type="PaxDb" id="273057-SSO0970"/>
<dbReference type="EnsemblBacteria" id="AAK41244">
    <property type="protein sequence ID" value="AAK41244"/>
    <property type="gene ID" value="SSO0970"/>
</dbReference>
<dbReference type="KEGG" id="sso:SSO0970"/>
<dbReference type="PATRIC" id="fig|273057.12.peg.969"/>
<dbReference type="eggNOG" id="arCOG04277">
    <property type="taxonomic scope" value="Archaea"/>
</dbReference>
<dbReference type="HOGENOM" id="CLU_102600_3_0_2"/>
<dbReference type="InParanoid" id="Q97ZE8"/>
<dbReference type="PhylomeDB" id="Q97ZE8"/>
<dbReference type="Proteomes" id="UP000001974">
    <property type="component" value="Chromosome"/>
</dbReference>
<dbReference type="GO" id="GO:0005737">
    <property type="term" value="C:cytoplasm"/>
    <property type="evidence" value="ECO:0007669"/>
    <property type="project" value="UniProtKB-SubCell"/>
</dbReference>
<dbReference type="GO" id="GO:0043022">
    <property type="term" value="F:ribosome binding"/>
    <property type="evidence" value="ECO:0007669"/>
    <property type="project" value="InterPro"/>
</dbReference>
<dbReference type="GO" id="GO:0003723">
    <property type="term" value="F:RNA binding"/>
    <property type="evidence" value="ECO:0007669"/>
    <property type="project" value="InterPro"/>
</dbReference>
<dbReference type="GO" id="GO:0003746">
    <property type="term" value="F:translation elongation factor activity"/>
    <property type="evidence" value="ECO:0000318"/>
    <property type="project" value="GO_Central"/>
</dbReference>
<dbReference type="GO" id="GO:0003743">
    <property type="term" value="F:translation initiation factor activity"/>
    <property type="evidence" value="ECO:0007669"/>
    <property type="project" value="UniProtKB-UniRule"/>
</dbReference>
<dbReference type="GO" id="GO:0045901">
    <property type="term" value="P:positive regulation of translational elongation"/>
    <property type="evidence" value="ECO:0007669"/>
    <property type="project" value="InterPro"/>
</dbReference>
<dbReference type="GO" id="GO:0045905">
    <property type="term" value="P:positive regulation of translational termination"/>
    <property type="evidence" value="ECO:0007669"/>
    <property type="project" value="InterPro"/>
</dbReference>
<dbReference type="GO" id="GO:0006414">
    <property type="term" value="P:translational elongation"/>
    <property type="evidence" value="ECO:0000318"/>
    <property type="project" value="GO_Central"/>
</dbReference>
<dbReference type="CDD" id="cd04467">
    <property type="entry name" value="S1_aIF5A"/>
    <property type="match status" value="1"/>
</dbReference>
<dbReference type="FunFam" id="2.30.30.30:FF:000038">
    <property type="entry name" value="Translation initiation factor 5A"/>
    <property type="match status" value="1"/>
</dbReference>
<dbReference type="FunFam" id="2.40.50.140:FF:000334">
    <property type="entry name" value="Translation initiation factor 5A"/>
    <property type="match status" value="1"/>
</dbReference>
<dbReference type="Gene3D" id="2.30.30.30">
    <property type="match status" value="1"/>
</dbReference>
<dbReference type="Gene3D" id="2.40.50.140">
    <property type="entry name" value="Nucleic acid-binding proteins"/>
    <property type="match status" value="1"/>
</dbReference>
<dbReference type="HAMAP" id="MF_00085">
    <property type="entry name" value="eIF_5A"/>
    <property type="match status" value="1"/>
</dbReference>
<dbReference type="InterPro" id="IPR001884">
    <property type="entry name" value="IF5A-like"/>
</dbReference>
<dbReference type="InterPro" id="IPR048670">
    <property type="entry name" value="IF5A-like_N"/>
</dbReference>
<dbReference type="InterPro" id="IPR012340">
    <property type="entry name" value="NA-bd_OB-fold"/>
</dbReference>
<dbReference type="InterPro" id="IPR014722">
    <property type="entry name" value="Rib_uL2_dom2"/>
</dbReference>
<dbReference type="InterPro" id="IPR019769">
    <property type="entry name" value="Trans_elong_IF5A_hypusine_site"/>
</dbReference>
<dbReference type="InterPro" id="IPR022847">
    <property type="entry name" value="Transl_elong_IF5A_arc"/>
</dbReference>
<dbReference type="InterPro" id="IPR020189">
    <property type="entry name" value="Transl_elong_IF5A_C"/>
</dbReference>
<dbReference type="InterPro" id="IPR008991">
    <property type="entry name" value="Translation_prot_SH3-like_sf"/>
</dbReference>
<dbReference type="NCBIfam" id="TIGR00037">
    <property type="entry name" value="eIF_5A"/>
    <property type="match status" value="1"/>
</dbReference>
<dbReference type="NCBIfam" id="NF003076">
    <property type="entry name" value="PRK03999.1"/>
    <property type="match status" value="1"/>
</dbReference>
<dbReference type="PANTHER" id="PTHR11673">
    <property type="entry name" value="TRANSLATION INITIATION FACTOR 5A FAMILY MEMBER"/>
    <property type="match status" value="1"/>
</dbReference>
<dbReference type="Pfam" id="PF01287">
    <property type="entry name" value="eIF-5a"/>
    <property type="match status" value="1"/>
</dbReference>
<dbReference type="Pfam" id="PF21485">
    <property type="entry name" value="IF5A-like_N"/>
    <property type="match status" value="1"/>
</dbReference>
<dbReference type="PIRSF" id="PIRSF003025">
    <property type="entry name" value="eIF5A"/>
    <property type="match status" value="1"/>
</dbReference>
<dbReference type="SMART" id="SM01376">
    <property type="entry name" value="eIF-5a"/>
    <property type="match status" value="1"/>
</dbReference>
<dbReference type="SUPFAM" id="SSF50249">
    <property type="entry name" value="Nucleic acid-binding proteins"/>
    <property type="match status" value="1"/>
</dbReference>
<dbReference type="SUPFAM" id="SSF50104">
    <property type="entry name" value="Translation proteins SH3-like domain"/>
    <property type="match status" value="1"/>
</dbReference>
<dbReference type="PROSITE" id="PS00302">
    <property type="entry name" value="IF5A_HYPUSINE"/>
    <property type="match status" value="1"/>
</dbReference>
<evidence type="ECO:0000255" key="1">
    <source>
        <dbReference type="HAMAP-Rule" id="MF_00085"/>
    </source>
</evidence>
<evidence type="ECO:0007829" key="2">
    <source>
        <dbReference type="PDB" id="8PUT"/>
    </source>
</evidence>
<proteinExistence type="evidence at protein level"/>
<feature type="chain" id="PRO_0000142504" description="Translation initiation factor 5A">
    <location>
        <begin position="1"/>
        <end position="131"/>
    </location>
</feature>
<feature type="modified residue" description="Hypusine" evidence="1">
    <location>
        <position position="36"/>
    </location>
</feature>
<feature type="strand" evidence="2">
    <location>
        <begin position="4"/>
        <end position="7"/>
    </location>
</feature>
<feature type="helix" evidence="2">
    <location>
        <begin position="8"/>
        <end position="10"/>
    </location>
</feature>
<feature type="strand" evidence="2">
    <location>
        <begin position="16"/>
        <end position="19"/>
    </location>
</feature>
<feature type="strand" evidence="2">
    <location>
        <begin position="22"/>
        <end position="32"/>
    </location>
</feature>
<feature type="strand" evidence="2">
    <location>
        <begin position="34"/>
        <end position="37"/>
    </location>
</feature>
<feature type="strand" evidence="2">
    <location>
        <begin position="41"/>
        <end position="48"/>
    </location>
</feature>
<feature type="turn" evidence="2">
    <location>
        <begin position="49"/>
        <end position="51"/>
    </location>
</feature>
<feature type="strand" evidence="2">
    <location>
        <begin position="54"/>
        <end position="60"/>
    </location>
</feature>
<feature type="strand" evidence="2">
    <location>
        <begin position="64"/>
        <end position="67"/>
    </location>
</feature>
<feature type="strand" evidence="2">
    <location>
        <begin position="73"/>
        <end position="77"/>
    </location>
</feature>
<feature type="strand" evidence="2">
    <location>
        <begin position="84"/>
        <end position="89"/>
    </location>
</feature>
<feature type="turn" evidence="2">
    <location>
        <begin position="90"/>
        <end position="92"/>
    </location>
</feature>
<feature type="strand" evidence="2">
    <location>
        <begin position="93"/>
        <end position="99"/>
    </location>
</feature>
<feature type="helix" evidence="2">
    <location>
        <begin position="104"/>
        <end position="107"/>
    </location>
</feature>
<feature type="strand" evidence="2">
    <location>
        <begin position="115"/>
        <end position="121"/>
    </location>
</feature>
<feature type="strand" evidence="2">
    <location>
        <begin position="124"/>
        <end position="130"/>
    </location>
</feature>